<dbReference type="EMBL" id="BA000028">
    <property type="protein sequence ID" value="BAC12981.1"/>
    <property type="molecule type" value="Genomic_DNA"/>
</dbReference>
<dbReference type="RefSeq" id="WP_011065427.1">
    <property type="nucleotide sequence ID" value="NC_004193.1"/>
</dbReference>
<dbReference type="SMR" id="Q8CUT2"/>
<dbReference type="STRING" id="221109.gene:10733263"/>
<dbReference type="KEGG" id="oih:OB1025"/>
<dbReference type="eggNOG" id="COG4474">
    <property type="taxonomic scope" value="Bacteria"/>
</dbReference>
<dbReference type="HOGENOM" id="CLU_105319_0_0_9"/>
<dbReference type="OrthoDB" id="2301957at2"/>
<dbReference type="PhylomeDB" id="Q8CUT2"/>
<dbReference type="Proteomes" id="UP000000822">
    <property type="component" value="Chromosome"/>
</dbReference>
<dbReference type="Gene3D" id="3.40.50.450">
    <property type="match status" value="1"/>
</dbReference>
<dbReference type="HAMAP" id="MF_01575">
    <property type="entry name" value="UPF0398"/>
    <property type="match status" value="1"/>
</dbReference>
<dbReference type="InterPro" id="IPR010697">
    <property type="entry name" value="YspA"/>
</dbReference>
<dbReference type="NCBIfam" id="NF010181">
    <property type="entry name" value="PRK13660.1"/>
    <property type="match status" value="1"/>
</dbReference>
<dbReference type="PANTHER" id="PTHR38440:SF1">
    <property type="entry name" value="UPF0398 PROTEIN SPR0331"/>
    <property type="match status" value="1"/>
</dbReference>
<dbReference type="PANTHER" id="PTHR38440">
    <property type="entry name" value="UPF0398 PROTEIN YPSA"/>
    <property type="match status" value="1"/>
</dbReference>
<dbReference type="Pfam" id="PF06908">
    <property type="entry name" value="YpsA"/>
    <property type="match status" value="1"/>
</dbReference>
<dbReference type="PIRSF" id="PIRSF021290">
    <property type="entry name" value="DUF1273"/>
    <property type="match status" value="1"/>
</dbReference>
<dbReference type="SUPFAM" id="SSF102405">
    <property type="entry name" value="MCP/YpsA-like"/>
    <property type="match status" value="1"/>
</dbReference>
<gene>
    <name type="ordered locus">OB1025</name>
</gene>
<keyword id="KW-1185">Reference proteome</keyword>
<evidence type="ECO:0000255" key="1">
    <source>
        <dbReference type="HAMAP-Rule" id="MF_01575"/>
    </source>
</evidence>
<feature type="chain" id="PRO_0000267167" description="UPF0398 protein OB1025">
    <location>
        <begin position="1"/>
        <end position="184"/>
    </location>
</feature>
<sequence>MKILMVTGYKPMELNIFKEDDSRIQFIKASIEKRVREFLEEGLEWVIISGQMGVELWAADVVMELKEEYPVQLGVFPPFENQDGRWPDALKEKYEELTMTADFFKPIYKGDYQGPYQFRTKDMWLIDKSDACLLLMDEEFPGSTKYFYDTLQKTAKDYPVFTITPQDIDDVVEDLRMQDPHYWD</sequence>
<accession>Q8CUT2</accession>
<comment type="similarity">
    <text evidence="1">Belongs to the UPF0398 family.</text>
</comment>
<proteinExistence type="inferred from homology"/>
<organism>
    <name type="scientific">Oceanobacillus iheyensis (strain DSM 14371 / CIP 107618 / JCM 11309 / KCTC 3954 / HTE831)</name>
    <dbReference type="NCBI Taxonomy" id="221109"/>
    <lineage>
        <taxon>Bacteria</taxon>
        <taxon>Bacillati</taxon>
        <taxon>Bacillota</taxon>
        <taxon>Bacilli</taxon>
        <taxon>Bacillales</taxon>
        <taxon>Bacillaceae</taxon>
        <taxon>Oceanobacillus</taxon>
    </lineage>
</organism>
<protein>
    <recommendedName>
        <fullName evidence="1">UPF0398 protein OB1025</fullName>
    </recommendedName>
</protein>
<name>Y1025_OCEIH</name>
<reference key="1">
    <citation type="journal article" date="2002" name="Nucleic Acids Res.">
        <title>Genome sequence of Oceanobacillus iheyensis isolated from the Iheya Ridge and its unexpected adaptive capabilities to extreme environments.</title>
        <authorList>
            <person name="Takami H."/>
            <person name="Takaki Y."/>
            <person name="Uchiyama I."/>
        </authorList>
    </citation>
    <scope>NUCLEOTIDE SEQUENCE [LARGE SCALE GENOMIC DNA]</scope>
    <source>
        <strain>DSM 14371 / CIP 107618 / JCM 11309 / KCTC 3954 / HTE831</strain>
    </source>
</reference>